<organism>
    <name type="scientific">Brevibacillus brevis</name>
    <name type="common">Bacillus brevis</name>
    <dbReference type="NCBI Taxonomy" id="1393"/>
    <lineage>
        <taxon>Bacteria</taxon>
        <taxon>Bacillati</taxon>
        <taxon>Bacillota</taxon>
        <taxon>Bacilli</taxon>
        <taxon>Bacillales</taxon>
        <taxon>Paenibacillaceae</taxon>
        <taxon>Brevibacillus</taxon>
    </lineage>
</organism>
<comment type="function">
    <text evidence="3">A methylase, recognizes the double-stranded sequence 5'-GCAGC-3', methylates C-2 on both strands, and protects the DNA from cleavage by the BbvI endonuclease.</text>
</comment>
<comment type="catalytic activity">
    <reaction evidence="2">
        <text>a 2'-deoxycytidine in DNA + S-adenosyl-L-methionine = a 5-methyl-2'-deoxycytidine in DNA + S-adenosyl-L-homocysteine + H(+)</text>
        <dbReference type="Rhea" id="RHEA:13681"/>
        <dbReference type="Rhea" id="RHEA-COMP:11369"/>
        <dbReference type="Rhea" id="RHEA-COMP:11370"/>
        <dbReference type="ChEBI" id="CHEBI:15378"/>
        <dbReference type="ChEBI" id="CHEBI:57856"/>
        <dbReference type="ChEBI" id="CHEBI:59789"/>
        <dbReference type="ChEBI" id="CHEBI:85452"/>
        <dbReference type="ChEBI" id="CHEBI:85454"/>
        <dbReference type="EC" id="2.1.1.37"/>
    </reaction>
</comment>
<comment type="similarity">
    <text evidence="1">Belongs to the class I-like SAM-binding methyltransferase superfamily. C5-methyltransferase family.</text>
</comment>
<protein>
    <recommendedName>
        <fullName evidence="3">Type II methyltransferase M.BbvI</fullName>
        <shortName evidence="3">M.BbvI</shortName>
        <ecNumber>2.1.1.37</ecNumber>
    </recommendedName>
    <alternativeName>
        <fullName>Cytosine-specific methyltransferase BbvI</fullName>
    </alternativeName>
    <alternativeName>
        <fullName>Modification methylase BbvI</fullName>
    </alternativeName>
</protein>
<evidence type="ECO:0000255" key="1">
    <source>
        <dbReference type="PROSITE-ProRule" id="PRU01016"/>
    </source>
</evidence>
<evidence type="ECO:0000255" key="2">
    <source>
        <dbReference type="PROSITE-ProRule" id="PRU10018"/>
    </source>
</evidence>
<evidence type="ECO:0000303" key="3">
    <source>
    </source>
</evidence>
<accession>P34905</accession>
<proteinExistence type="inferred from homology"/>
<reference key="1">
    <citation type="submission" date="1994-02" db="UniProtKB">
        <authorList>
            <person name="Barsomian J.M."/>
            <person name="Wilson G.G."/>
        </authorList>
    </citation>
    <scope>NUCLEOTIDE SEQUENCE [GENOMIC DNA]</scope>
</reference>
<reference key="2">
    <citation type="journal article" date="2003" name="Nucleic Acids Res.">
        <title>A nomenclature for restriction enzymes, DNA methyltransferases, homing endonucleases and their genes.</title>
        <authorList>
            <person name="Roberts R.J."/>
            <person name="Belfort M."/>
            <person name="Bestor T."/>
            <person name="Bhagwat A.S."/>
            <person name="Bickle T.A."/>
            <person name="Bitinaite J."/>
            <person name="Blumenthal R.M."/>
            <person name="Degtyarev S.K."/>
            <person name="Dryden D.T."/>
            <person name="Dybvig K."/>
            <person name="Firman K."/>
            <person name="Gromova E.S."/>
            <person name="Gumport R.I."/>
            <person name="Halford S.E."/>
            <person name="Hattman S."/>
            <person name="Heitman J."/>
            <person name="Hornby D.P."/>
            <person name="Janulaitis A."/>
            <person name="Jeltsch A."/>
            <person name="Josephsen J."/>
            <person name="Kiss A."/>
            <person name="Klaenhammer T.R."/>
            <person name="Kobayashi I."/>
            <person name="Kong H."/>
            <person name="Krueger D.H."/>
            <person name="Lacks S."/>
            <person name="Marinus M.G."/>
            <person name="Miyahara M."/>
            <person name="Morgan R.D."/>
            <person name="Murray N.E."/>
            <person name="Nagaraja V."/>
            <person name="Piekarowicz A."/>
            <person name="Pingoud A."/>
            <person name="Raleigh E."/>
            <person name="Rao D.N."/>
            <person name="Reich N."/>
            <person name="Repin V.E."/>
            <person name="Selker E.U."/>
            <person name="Shaw P.C."/>
            <person name="Stein D.C."/>
            <person name="Stoddard B.L."/>
            <person name="Szybalski W."/>
            <person name="Trautner T.A."/>
            <person name="Van Etten J.L."/>
            <person name="Vitor J.M."/>
            <person name="Wilson G.G."/>
            <person name="Xu S.Y."/>
        </authorList>
    </citation>
    <scope>NOMENCLATURE</scope>
</reference>
<name>MTB1_BREBE</name>
<feature type="chain" id="PRO_0000087861" description="Type II methyltransferase M.BbvI">
    <location>
        <begin position="1"/>
        <end position="374"/>
    </location>
</feature>
<feature type="domain" description="SAM-dependent MTase C5-type" evidence="1">
    <location>
        <begin position="3"/>
        <end position="347"/>
    </location>
</feature>
<feature type="active site" evidence="1 2">
    <location>
        <position position="92"/>
    </location>
</feature>
<sequence>MKFRKGELFCGPGGLALGAKEAKYMHPETGEVFEFEHAWANDIDEWACETFRTNICPDRPDSVVCGDVRELDIKSLGEKFGEIDAFTFGFPCNDYSIVGEHKGMEGNYGPLYSYGVKILNEYNPLVFIAENVGGLQSANEGKAFLGILNDLASAGKYGYKLVPHLYKFEEYGVPQRRHRIIIVGIRKDQDVAFRVPEPTHKEKYRTASEALADIPEDALNHEFTRHKKKVVEMLNHIAPGGNAWSESIPEELRLNVKKVRMSQIYRRLHPDQPSYTVTGSGGGGTHGYHWEEPRALTNRERARLQTFPDDYEFIGKKEMVRKQIGMAVPPDGAKIILEAVLKTFARIEYPSINSKWDFESVSAEQVIEEVQEIM</sequence>
<keyword id="KW-0238">DNA-binding</keyword>
<keyword id="KW-0489">Methyltransferase</keyword>
<keyword id="KW-0680">Restriction system</keyword>
<keyword id="KW-0949">S-adenosyl-L-methionine</keyword>
<keyword id="KW-0808">Transferase</keyword>
<dbReference type="EC" id="2.1.1.37"/>
<dbReference type="SMR" id="P34905"/>
<dbReference type="REBASE" id="156149">
    <property type="entry name" value="M.BamRD77ORF3565P"/>
</dbReference>
<dbReference type="REBASE" id="162023">
    <property type="entry name" value="M.BsuBS38ORF4087P"/>
</dbReference>
<dbReference type="REBASE" id="182839">
    <property type="entry name" value="M.Bli14ORF3613P"/>
</dbReference>
<dbReference type="REBASE" id="251327">
    <property type="entry name" value="M.BliADL4ORF3338P"/>
</dbReference>
<dbReference type="PRO" id="PR:P34905"/>
<dbReference type="GO" id="GO:0003886">
    <property type="term" value="F:DNA (cytosine-5-)-methyltransferase activity"/>
    <property type="evidence" value="ECO:0007669"/>
    <property type="project" value="UniProtKB-EC"/>
</dbReference>
<dbReference type="GO" id="GO:0003677">
    <property type="term" value="F:DNA binding"/>
    <property type="evidence" value="ECO:0007669"/>
    <property type="project" value="UniProtKB-KW"/>
</dbReference>
<dbReference type="GO" id="GO:0009307">
    <property type="term" value="P:DNA restriction-modification system"/>
    <property type="evidence" value="ECO:0007669"/>
    <property type="project" value="UniProtKB-KW"/>
</dbReference>
<dbReference type="GO" id="GO:0032259">
    <property type="term" value="P:methylation"/>
    <property type="evidence" value="ECO:0007669"/>
    <property type="project" value="UniProtKB-KW"/>
</dbReference>
<dbReference type="GO" id="GO:0044027">
    <property type="term" value="P:negative regulation of gene expression via chromosomal CpG island methylation"/>
    <property type="evidence" value="ECO:0007669"/>
    <property type="project" value="TreeGrafter"/>
</dbReference>
<dbReference type="CDD" id="cd00315">
    <property type="entry name" value="Cyt_C5_DNA_methylase"/>
    <property type="match status" value="1"/>
</dbReference>
<dbReference type="Gene3D" id="3.90.120.10">
    <property type="entry name" value="DNA Methylase, subunit A, domain 2"/>
    <property type="match status" value="1"/>
</dbReference>
<dbReference type="Gene3D" id="3.40.50.150">
    <property type="entry name" value="Vaccinia Virus protein VP39"/>
    <property type="match status" value="1"/>
</dbReference>
<dbReference type="InterPro" id="IPR050390">
    <property type="entry name" value="C5-Methyltransferase"/>
</dbReference>
<dbReference type="InterPro" id="IPR018117">
    <property type="entry name" value="C5_DNA_meth_AS"/>
</dbReference>
<dbReference type="InterPro" id="IPR001525">
    <property type="entry name" value="C5_MeTfrase"/>
</dbReference>
<dbReference type="InterPro" id="IPR029063">
    <property type="entry name" value="SAM-dependent_MTases_sf"/>
</dbReference>
<dbReference type="NCBIfam" id="TIGR00675">
    <property type="entry name" value="dcm"/>
    <property type="match status" value="1"/>
</dbReference>
<dbReference type="PANTHER" id="PTHR10629">
    <property type="entry name" value="CYTOSINE-SPECIFIC METHYLTRANSFERASE"/>
    <property type="match status" value="1"/>
</dbReference>
<dbReference type="PANTHER" id="PTHR10629:SF52">
    <property type="entry name" value="DNA (CYTOSINE-5)-METHYLTRANSFERASE 1"/>
    <property type="match status" value="1"/>
</dbReference>
<dbReference type="Pfam" id="PF00145">
    <property type="entry name" value="DNA_methylase"/>
    <property type="match status" value="1"/>
</dbReference>
<dbReference type="PRINTS" id="PR00105">
    <property type="entry name" value="C5METTRFRASE"/>
</dbReference>
<dbReference type="SUPFAM" id="SSF53335">
    <property type="entry name" value="S-adenosyl-L-methionine-dependent methyltransferases"/>
    <property type="match status" value="1"/>
</dbReference>
<dbReference type="PROSITE" id="PS00094">
    <property type="entry name" value="C5_MTASE_1"/>
    <property type="match status" value="1"/>
</dbReference>
<dbReference type="PROSITE" id="PS51679">
    <property type="entry name" value="SAM_MT_C5"/>
    <property type="match status" value="1"/>
</dbReference>
<gene>
    <name type="primary">bbvIM</name>
</gene>